<organism>
    <name type="scientific">Culex quinquefasciatus</name>
    <name type="common">Southern house mosquito</name>
    <name type="synonym">Culex pungens</name>
    <dbReference type="NCBI Taxonomy" id="7176"/>
    <lineage>
        <taxon>Eukaryota</taxon>
        <taxon>Metazoa</taxon>
        <taxon>Ecdysozoa</taxon>
        <taxon>Arthropoda</taxon>
        <taxon>Hexapoda</taxon>
        <taxon>Insecta</taxon>
        <taxon>Pterygota</taxon>
        <taxon>Neoptera</taxon>
        <taxon>Endopterygota</taxon>
        <taxon>Diptera</taxon>
        <taxon>Nematocera</taxon>
        <taxon>Culicoidea</taxon>
        <taxon>Culicidae</taxon>
        <taxon>Culicinae</taxon>
        <taxon>Culicini</taxon>
        <taxon>Culex</taxon>
        <taxon>Culex</taxon>
    </lineage>
</organism>
<keyword id="KW-0479">Metal-binding</keyword>
<keyword id="KW-1185">Reference proteome</keyword>
<keyword id="KW-0862">Zinc</keyword>
<keyword id="KW-0863">Zinc-finger</keyword>
<protein>
    <recommendedName>
        <fullName>Lateral signaling target protein 2 homolog</fullName>
    </recommendedName>
</protein>
<evidence type="ECO:0000250" key="1"/>
<evidence type="ECO:0000255" key="2">
    <source>
        <dbReference type="PROSITE-ProRule" id="PRU00091"/>
    </source>
</evidence>
<evidence type="ECO:0000256" key="3">
    <source>
        <dbReference type="SAM" id="MobiDB-lite"/>
    </source>
</evidence>
<evidence type="ECO:0000305" key="4"/>
<reference key="1">
    <citation type="submission" date="2007-03" db="EMBL/GenBank/DDBJ databases">
        <title>Annotation of Culex pipiens quinquefasciatus.</title>
        <authorList>
            <consortium name="The Broad Institute Genome Sequencing Platform"/>
            <person name="Atkinson P.W."/>
            <person name="Hemingway J."/>
            <person name="Christensen B.M."/>
            <person name="Higgs S."/>
            <person name="Kodira C.D."/>
            <person name="Hannick L.I."/>
            <person name="Megy K."/>
            <person name="O'Leary S.B."/>
            <person name="Pearson M."/>
            <person name="Haas B.J."/>
            <person name="Mauceli E."/>
            <person name="Wortman J.R."/>
            <person name="Lee N.H."/>
            <person name="Guigo R."/>
            <person name="Stanke M."/>
            <person name="Alvarado L."/>
            <person name="Amedeo P."/>
            <person name="Antoine C.H."/>
            <person name="Arensburger P."/>
            <person name="Bidwell S.L."/>
            <person name="Crawford M."/>
            <person name="Camaro F."/>
            <person name="Devon K."/>
            <person name="Engels R."/>
            <person name="Hammond M."/>
            <person name="Howarth C."/>
            <person name="Koehrsen M."/>
            <person name="Lawson D."/>
            <person name="Montgomery P."/>
            <person name="Nene V."/>
            <person name="Nusbaum C."/>
            <person name="Puiu D."/>
            <person name="Romero-Severson J."/>
            <person name="Severson D.W."/>
            <person name="Shumway M."/>
            <person name="Sisk P."/>
            <person name="Stolte C."/>
            <person name="Zeng Q."/>
            <person name="Eisenstadt E."/>
            <person name="Fraser-Liggett C.M."/>
            <person name="Strausberg R."/>
            <person name="Galagan J."/>
            <person name="Birren B."/>
            <person name="Collins F.H."/>
        </authorList>
    </citation>
    <scope>NUCLEOTIDE SEQUENCE [LARGE SCALE GENOMIC DNA]</scope>
    <source>
        <strain>JHB</strain>
    </source>
</reference>
<name>LST2_CULQU</name>
<accession>B0WAQ0</accession>
<comment type="function">
    <text evidence="1">Negative regulator of epidermal growth factor receptor (EGFR) signaling.</text>
</comment>
<comment type="similarity">
    <text evidence="4">Belongs to the lst-2 family.</text>
</comment>
<gene>
    <name type="ORF">CPIJ004116</name>
</gene>
<feature type="chain" id="PRO_0000378961" description="Lateral signaling target protein 2 homolog">
    <location>
        <begin position="1"/>
        <end position="907"/>
    </location>
</feature>
<feature type="zinc finger region" description="FYVE-type" evidence="2">
    <location>
        <begin position="845"/>
        <end position="905"/>
    </location>
</feature>
<feature type="region of interest" description="Disordered" evidence="3">
    <location>
        <begin position="339"/>
        <end position="395"/>
    </location>
</feature>
<feature type="region of interest" description="Disordered" evidence="3">
    <location>
        <begin position="463"/>
        <end position="604"/>
    </location>
</feature>
<feature type="region of interest" description="Disordered" evidence="3">
    <location>
        <begin position="662"/>
        <end position="688"/>
    </location>
</feature>
<feature type="region of interest" description="Disordered" evidence="3">
    <location>
        <begin position="716"/>
        <end position="756"/>
    </location>
</feature>
<feature type="region of interest" description="Disordered" evidence="3">
    <location>
        <begin position="770"/>
        <end position="834"/>
    </location>
</feature>
<feature type="compositionally biased region" description="Polar residues" evidence="3">
    <location>
        <begin position="351"/>
        <end position="361"/>
    </location>
</feature>
<feature type="compositionally biased region" description="Acidic residues" evidence="3">
    <location>
        <begin position="367"/>
        <end position="393"/>
    </location>
</feature>
<feature type="compositionally biased region" description="Polar residues" evidence="3">
    <location>
        <begin position="463"/>
        <end position="475"/>
    </location>
</feature>
<feature type="compositionally biased region" description="Polar residues" evidence="3">
    <location>
        <begin position="486"/>
        <end position="495"/>
    </location>
</feature>
<feature type="compositionally biased region" description="Acidic residues" evidence="3">
    <location>
        <begin position="501"/>
        <end position="516"/>
    </location>
</feature>
<feature type="compositionally biased region" description="Basic residues" evidence="3">
    <location>
        <begin position="525"/>
        <end position="549"/>
    </location>
</feature>
<feature type="compositionally biased region" description="Low complexity" evidence="3">
    <location>
        <begin position="550"/>
        <end position="565"/>
    </location>
</feature>
<feature type="compositionally biased region" description="Polar residues" evidence="3">
    <location>
        <begin position="568"/>
        <end position="580"/>
    </location>
</feature>
<feature type="compositionally biased region" description="Gly residues" evidence="3">
    <location>
        <begin position="592"/>
        <end position="602"/>
    </location>
</feature>
<feature type="compositionally biased region" description="Polar residues" evidence="3">
    <location>
        <begin position="742"/>
        <end position="751"/>
    </location>
</feature>
<feature type="compositionally biased region" description="Low complexity" evidence="3">
    <location>
        <begin position="777"/>
        <end position="793"/>
    </location>
</feature>
<feature type="compositionally biased region" description="Polar residues" evidence="3">
    <location>
        <begin position="816"/>
        <end position="826"/>
    </location>
</feature>
<feature type="binding site" evidence="2">
    <location>
        <position position="851"/>
    </location>
    <ligand>
        <name>Zn(2+)</name>
        <dbReference type="ChEBI" id="CHEBI:29105"/>
        <label>1</label>
    </ligand>
</feature>
<feature type="binding site" evidence="2">
    <location>
        <position position="854"/>
    </location>
    <ligand>
        <name>Zn(2+)</name>
        <dbReference type="ChEBI" id="CHEBI:29105"/>
        <label>1</label>
    </ligand>
</feature>
<feature type="binding site" evidence="2">
    <location>
        <position position="867"/>
    </location>
    <ligand>
        <name>Zn(2+)</name>
        <dbReference type="ChEBI" id="CHEBI:29105"/>
        <label>2</label>
    </ligand>
</feature>
<feature type="binding site" evidence="2">
    <location>
        <position position="870"/>
    </location>
    <ligand>
        <name>Zn(2+)</name>
        <dbReference type="ChEBI" id="CHEBI:29105"/>
        <label>2</label>
    </ligand>
</feature>
<feature type="binding site" evidence="2">
    <location>
        <position position="875"/>
    </location>
    <ligand>
        <name>Zn(2+)</name>
        <dbReference type="ChEBI" id="CHEBI:29105"/>
        <label>1</label>
    </ligand>
</feature>
<feature type="binding site" evidence="2">
    <location>
        <position position="878"/>
    </location>
    <ligand>
        <name>Zn(2+)</name>
        <dbReference type="ChEBI" id="CHEBI:29105"/>
        <label>1</label>
    </ligand>
</feature>
<feature type="binding site" evidence="2">
    <location>
        <position position="897"/>
    </location>
    <ligand>
        <name>Zn(2+)</name>
        <dbReference type="ChEBI" id="CHEBI:29105"/>
        <label>2</label>
    </ligand>
</feature>
<feature type="binding site" evidence="2">
    <location>
        <position position="900"/>
    </location>
    <ligand>
        <name>Zn(2+)</name>
        <dbReference type="ChEBI" id="CHEBI:29105"/>
        <label>2</label>
    </ligand>
</feature>
<dbReference type="EMBL" id="DS231874">
    <property type="protein sequence ID" value="EDS41691.1"/>
    <property type="molecule type" value="Genomic_DNA"/>
</dbReference>
<dbReference type="RefSeq" id="XP_001845784.1">
    <property type="nucleotide sequence ID" value="XM_001845732.1"/>
</dbReference>
<dbReference type="SMR" id="B0WAQ0"/>
<dbReference type="FunCoup" id="B0WAQ0">
    <property type="interactions" value="163"/>
</dbReference>
<dbReference type="EnsemblMetazoa" id="CPIJ004116-RA">
    <property type="protein sequence ID" value="CPIJ004116-PA"/>
    <property type="gene ID" value="CPIJ004116"/>
</dbReference>
<dbReference type="KEGG" id="cqu:CpipJ_CPIJ004116"/>
<dbReference type="VEuPathDB" id="VectorBase:CPIJ004116"/>
<dbReference type="VEuPathDB" id="VectorBase:CQUJHB012925"/>
<dbReference type="eggNOG" id="KOG1818">
    <property type="taxonomic scope" value="Eukaryota"/>
</dbReference>
<dbReference type="eggNOG" id="KOG1819">
    <property type="taxonomic scope" value="Eukaryota"/>
</dbReference>
<dbReference type="HOGENOM" id="CLU_007360_1_0_1"/>
<dbReference type="InParanoid" id="B0WAQ0"/>
<dbReference type="OMA" id="CYVREVQ"/>
<dbReference type="OrthoDB" id="20035at2759"/>
<dbReference type="PhylomeDB" id="B0WAQ0"/>
<dbReference type="Proteomes" id="UP000002320">
    <property type="component" value="Unassembled WGS sequence"/>
</dbReference>
<dbReference type="GO" id="GO:0031901">
    <property type="term" value="C:early endosome membrane"/>
    <property type="evidence" value="ECO:0007669"/>
    <property type="project" value="TreeGrafter"/>
</dbReference>
<dbReference type="GO" id="GO:0008270">
    <property type="term" value="F:zinc ion binding"/>
    <property type="evidence" value="ECO:0007669"/>
    <property type="project" value="UniProtKB-KW"/>
</dbReference>
<dbReference type="CDD" id="cd15731">
    <property type="entry name" value="FYVE_LST2"/>
    <property type="match status" value="1"/>
</dbReference>
<dbReference type="FunFam" id="3.30.40.10:FF:000073">
    <property type="entry name" value="myotubularin-related protein 4 isoform X2"/>
    <property type="match status" value="1"/>
</dbReference>
<dbReference type="Gene3D" id="3.30.40.10">
    <property type="entry name" value="Zinc/RING finger domain, C3HC4 (zinc finger)"/>
    <property type="match status" value="1"/>
</dbReference>
<dbReference type="InterPro" id="IPR043269">
    <property type="entry name" value="FYVE_LST2"/>
</dbReference>
<dbReference type="InterPro" id="IPR051118">
    <property type="entry name" value="LST-2"/>
</dbReference>
<dbReference type="InterPro" id="IPR000306">
    <property type="entry name" value="Znf_FYVE"/>
</dbReference>
<dbReference type="InterPro" id="IPR017455">
    <property type="entry name" value="Znf_FYVE-rel"/>
</dbReference>
<dbReference type="InterPro" id="IPR011011">
    <property type="entry name" value="Znf_FYVE_PHD"/>
</dbReference>
<dbReference type="InterPro" id="IPR013083">
    <property type="entry name" value="Znf_RING/FYVE/PHD"/>
</dbReference>
<dbReference type="PANTHER" id="PTHR46465">
    <property type="entry name" value="LATERAL SIGNALING TARGET PROTEIN 2 HOMOLOG"/>
    <property type="match status" value="1"/>
</dbReference>
<dbReference type="PANTHER" id="PTHR46465:SF2">
    <property type="entry name" value="LATERAL SIGNALING TARGET PROTEIN 2 HOMOLOG"/>
    <property type="match status" value="1"/>
</dbReference>
<dbReference type="Pfam" id="PF01363">
    <property type="entry name" value="FYVE"/>
    <property type="match status" value="1"/>
</dbReference>
<dbReference type="SMART" id="SM00064">
    <property type="entry name" value="FYVE"/>
    <property type="match status" value="1"/>
</dbReference>
<dbReference type="SUPFAM" id="SSF57903">
    <property type="entry name" value="FYVE/PHD zinc finger"/>
    <property type="match status" value="1"/>
</dbReference>
<dbReference type="PROSITE" id="PS50178">
    <property type="entry name" value="ZF_FYVE"/>
    <property type="match status" value="1"/>
</dbReference>
<sequence length="907" mass="98062">MLVGADDKSLLARFYHADRALTAVASELDSFDGRAEPVRCTRLVGRLRQGQDRVLAITNQIMDELLGEDRAARAFRAKFPEEVLQESLAGQLWFGAECLAAGSSIMNREVESATMRPLAKAVTKSLDNVRNLLREQCLRNNTPNSLTLRLDVNDAATEQLYESLKIFDRLFAEFELLYVSAMVQVKSKQEYEMQELICVLFSETLQRALKVGLLEQEQVDSYDPALMFSIPRLAIVAGLVIFKEGPLNMDQPADDISEMFRPFRKLLIKMRDLLRTLTKHELYQLEKLLCTNEEISLKEQQIICDGNEIVGGGQSPSAAPNPARDDTVVIVTTSATVNSSDNLRGQEPQEDISSFYTSNNRRTVDSEPNEDDDVSESNDEDEDEGEEVDEDDPANILKDALVTSDCASGYLIPNTNFGNLLQTNEAPLTDSFIATDEELKLASGAASSHARIEQILSESNQKLTDSGLGTANPSLDHSPELETERPVTSSHPIAQSSSSSSEEEGEVDEYDEDDSESTLCEPKPHHTKHQRRHRHHHHHHRKHYSKHRSSAAGSAGTSGTTCSAAERQISSCDTSPSSGGLPSECGSSTSGGSSGNSSGGSGDADAAQEVAMAIRAAGRIKFKTTENLLHRLFVCIAGVADQLQTNFAADLRQMLKSVFVINSSPPEPEDPPEPAANSTDKPKEPDPADLFEFRASEQDVITNSGGSSQSIYSAEEVNAEDPHDSVFGSPPGGASPVRASSAPRTMMTTAASSENGSVTVNVSVSVVTAGSGGSGSGSSRSSQERSVSLSETSIVVDGSGGNTEGTALLVPRESTPKSVQSEQSGQRGMMEERRMPEAPPRWIPDGDAPRCMACASSFTPFRRRHHCRNCGGVFCGGCSSASAPLPKYGLTKAVRVCRECFVREVGV</sequence>
<proteinExistence type="inferred from homology"/>